<feature type="chain" id="PRO_1000047207" description="Thiopurine S-methyltransferase">
    <location>
        <begin position="1"/>
        <end position="220"/>
    </location>
</feature>
<feature type="binding site" evidence="1">
    <location>
        <position position="10"/>
    </location>
    <ligand>
        <name>S-adenosyl-L-methionine</name>
        <dbReference type="ChEBI" id="CHEBI:59789"/>
    </ligand>
</feature>
<feature type="binding site" evidence="1">
    <location>
        <position position="45"/>
    </location>
    <ligand>
        <name>S-adenosyl-L-methionine</name>
        <dbReference type="ChEBI" id="CHEBI:59789"/>
    </ligand>
</feature>
<feature type="binding site" evidence="1">
    <location>
        <position position="66"/>
    </location>
    <ligand>
        <name>S-adenosyl-L-methionine</name>
        <dbReference type="ChEBI" id="CHEBI:59789"/>
    </ligand>
</feature>
<feature type="binding site" evidence="1">
    <location>
        <position position="123"/>
    </location>
    <ligand>
        <name>S-adenosyl-L-methionine</name>
        <dbReference type="ChEBI" id="CHEBI:59789"/>
    </ligand>
</feature>
<dbReference type="EC" id="2.1.1.67" evidence="1"/>
<dbReference type="EMBL" id="CP000450">
    <property type="protein sequence ID" value="ABI60489.1"/>
    <property type="molecule type" value="Genomic_DNA"/>
</dbReference>
<dbReference type="RefSeq" id="WP_011635265.1">
    <property type="nucleotide sequence ID" value="NC_008344.1"/>
</dbReference>
<dbReference type="SMR" id="Q0ADU3"/>
<dbReference type="STRING" id="335283.Neut_2272"/>
<dbReference type="KEGG" id="net:Neut_2272"/>
<dbReference type="eggNOG" id="COG0500">
    <property type="taxonomic scope" value="Bacteria"/>
</dbReference>
<dbReference type="HOGENOM" id="CLU_085515_1_0_4"/>
<dbReference type="OrthoDB" id="9778208at2"/>
<dbReference type="Proteomes" id="UP000001966">
    <property type="component" value="Chromosome"/>
</dbReference>
<dbReference type="GO" id="GO:0005737">
    <property type="term" value="C:cytoplasm"/>
    <property type="evidence" value="ECO:0007669"/>
    <property type="project" value="UniProtKB-SubCell"/>
</dbReference>
<dbReference type="GO" id="GO:0008119">
    <property type="term" value="F:thiopurine S-methyltransferase activity"/>
    <property type="evidence" value="ECO:0007669"/>
    <property type="project" value="UniProtKB-UniRule"/>
</dbReference>
<dbReference type="GO" id="GO:0032259">
    <property type="term" value="P:methylation"/>
    <property type="evidence" value="ECO:0007669"/>
    <property type="project" value="UniProtKB-KW"/>
</dbReference>
<dbReference type="GO" id="GO:0010038">
    <property type="term" value="P:response to metal ion"/>
    <property type="evidence" value="ECO:0007669"/>
    <property type="project" value="InterPro"/>
</dbReference>
<dbReference type="FunFam" id="3.40.50.150:FF:000101">
    <property type="entry name" value="Thiopurine S-methyltransferase"/>
    <property type="match status" value="1"/>
</dbReference>
<dbReference type="Gene3D" id="3.40.50.150">
    <property type="entry name" value="Vaccinia Virus protein VP39"/>
    <property type="match status" value="1"/>
</dbReference>
<dbReference type="HAMAP" id="MF_00812">
    <property type="entry name" value="Thiopur_methtran"/>
    <property type="match status" value="1"/>
</dbReference>
<dbReference type="InterPro" id="IPR029063">
    <property type="entry name" value="SAM-dependent_MTases_sf"/>
</dbReference>
<dbReference type="InterPro" id="IPR022474">
    <property type="entry name" value="Thiopur_S-MeTfrase_Se/Te_detox"/>
</dbReference>
<dbReference type="InterPro" id="IPR025835">
    <property type="entry name" value="Thiopurine_S-MeTrfase"/>
</dbReference>
<dbReference type="InterPro" id="IPR008854">
    <property type="entry name" value="TPMT"/>
</dbReference>
<dbReference type="NCBIfam" id="NF009732">
    <property type="entry name" value="PRK13255.1"/>
    <property type="match status" value="1"/>
</dbReference>
<dbReference type="NCBIfam" id="TIGR03840">
    <property type="entry name" value="TMPT_Se_Te"/>
    <property type="match status" value="1"/>
</dbReference>
<dbReference type="PANTHER" id="PTHR10259">
    <property type="entry name" value="THIOPURINE S-METHYLTRANSFERASE"/>
    <property type="match status" value="1"/>
</dbReference>
<dbReference type="PANTHER" id="PTHR10259:SF11">
    <property type="entry name" value="THIOPURINE S-METHYLTRANSFERASE"/>
    <property type="match status" value="1"/>
</dbReference>
<dbReference type="Pfam" id="PF05724">
    <property type="entry name" value="TPMT"/>
    <property type="match status" value="1"/>
</dbReference>
<dbReference type="PIRSF" id="PIRSF023956">
    <property type="entry name" value="Thiopurine_S-methyltransferase"/>
    <property type="match status" value="1"/>
</dbReference>
<dbReference type="SUPFAM" id="SSF53335">
    <property type="entry name" value="S-adenosyl-L-methionine-dependent methyltransferases"/>
    <property type="match status" value="1"/>
</dbReference>
<dbReference type="PROSITE" id="PS51585">
    <property type="entry name" value="SAM_MT_TPMT"/>
    <property type="match status" value="1"/>
</dbReference>
<accession>Q0ADU3</accession>
<proteinExistence type="inferred from homology"/>
<sequence>MEHEFWLQSWHEGRTGFHQLRVQPLLQKYWPTLDLPTGSKIFVPLTGKSLDMAWLAAQGYRVLGVELSLLAVQQFFAEHGLKPAVRESHYGTHYTARNIEVICGDTFALDAALLSDCSGIYDRAALIALPPELRVPYINELMTCLPAGCSGLLITLEYQQQEMVGPPFSVEEAEVLKCYSPRWCVKLLERNDILPQEPGFAARGLTKLATAVYQLQRLAV</sequence>
<organism>
    <name type="scientific">Nitrosomonas eutropha (strain DSM 101675 / C91 / Nm57)</name>
    <dbReference type="NCBI Taxonomy" id="335283"/>
    <lineage>
        <taxon>Bacteria</taxon>
        <taxon>Pseudomonadati</taxon>
        <taxon>Pseudomonadota</taxon>
        <taxon>Betaproteobacteria</taxon>
        <taxon>Nitrosomonadales</taxon>
        <taxon>Nitrosomonadaceae</taxon>
        <taxon>Nitrosomonas</taxon>
    </lineage>
</organism>
<evidence type="ECO:0000255" key="1">
    <source>
        <dbReference type="HAMAP-Rule" id="MF_00812"/>
    </source>
</evidence>
<gene>
    <name evidence="1" type="primary">tpm</name>
    <name type="ordered locus">Neut_2272</name>
</gene>
<name>TPMT_NITEC</name>
<comment type="catalytic activity">
    <reaction evidence="1">
        <text>S-adenosyl-L-methionine + a thiopurine = S-adenosyl-L-homocysteine + a thiopurine S-methylether.</text>
        <dbReference type="EC" id="2.1.1.67"/>
    </reaction>
</comment>
<comment type="subcellular location">
    <subcellularLocation>
        <location evidence="1">Cytoplasm</location>
    </subcellularLocation>
</comment>
<comment type="similarity">
    <text evidence="1">Belongs to the class I-like SAM-binding methyltransferase superfamily. TPMT family.</text>
</comment>
<protein>
    <recommendedName>
        <fullName evidence="1">Thiopurine S-methyltransferase</fullName>
        <ecNumber evidence="1">2.1.1.67</ecNumber>
    </recommendedName>
    <alternativeName>
        <fullName evidence="1">Thiopurine methyltransferase</fullName>
    </alternativeName>
</protein>
<keyword id="KW-0963">Cytoplasm</keyword>
<keyword id="KW-0489">Methyltransferase</keyword>
<keyword id="KW-0949">S-adenosyl-L-methionine</keyword>
<keyword id="KW-0808">Transferase</keyword>
<reference key="1">
    <citation type="journal article" date="2007" name="Environ. Microbiol.">
        <title>Whole-genome analysis of the ammonia-oxidizing bacterium, Nitrosomonas eutropha C91: implications for niche adaptation.</title>
        <authorList>
            <person name="Stein L.Y."/>
            <person name="Arp D.J."/>
            <person name="Berube P.M."/>
            <person name="Chain P.S."/>
            <person name="Hauser L."/>
            <person name="Jetten M.S."/>
            <person name="Klotz M.G."/>
            <person name="Larimer F.W."/>
            <person name="Norton J.M."/>
            <person name="Op den Camp H.J.M."/>
            <person name="Shin M."/>
            <person name="Wei X."/>
        </authorList>
    </citation>
    <scope>NUCLEOTIDE SEQUENCE [LARGE SCALE GENOMIC DNA]</scope>
    <source>
        <strain>DSM 101675 / C91 / Nm57</strain>
    </source>
</reference>